<proteinExistence type="predicted"/>
<gene>
    <name evidence="1" type="ORF">C76L</name>
</gene>
<sequence>MDQEQLFDKLYSLNLQLTAKNDQKKRKPVFYPEWEKDPTDTNDDVYYGLRYKPEAKKTLRSTWMQSEFESHRSSSA</sequence>
<keyword id="KW-1185">Reference proteome</keyword>
<reference key="1">
    <citation type="journal article" date="1995" name="Virology">
        <title>Analysis of the complete nucleotide sequence of African swine fever virus.</title>
        <authorList>
            <person name="Yanez R.J."/>
            <person name="Rodriguez J.M."/>
            <person name="Nogal M.L."/>
            <person name="Yuste L."/>
            <person name="Enriquez C."/>
            <person name="Rodriguez J.F."/>
            <person name="Vinuela E."/>
        </authorList>
    </citation>
    <scope>NUCLEOTIDE SEQUENCE [LARGE SCALE GENOMIC DNA]</scope>
</reference>
<reference key="2">
    <citation type="journal article" date="2020" name="J. Virol.">
        <title>The African Swine Fever Virus Transcriptome.</title>
        <authorList>
            <person name="Cackett G."/>
            <person name="Matelska D."/>
            <person name="Sykora M."/>
            <person name="Portugal R."/>
            <person name="Malecki M."/>
            <person name="Baehler J."/>
            <person name="Dixon L."/>
            <person name="Werner F."/>
        </authorList>
    </citation>
    <scope>IDENTIFICATION</scope>
</reference>
<organismHost>
    <name type="scientific">Ornithodoros</name>
    <name type="common">relapsing fever ticks</name>
    <dbReference type="NCBI Taxonomy" id="6937"/>
</organismHost>
<organismHost>
    <name type="scientific">Sus scrofa</name>
    <name type="common">Pig</name>
    <dbReference type="NCBI Taxonomy" id="9823"/>
</organismHost>
<dbReference type="EMBL" id="U18466">
    <property type="status" value="NOT_ANNOTATED_CDS"/>
    <property type="molecule type" value="Genomic_DNA"/>
</dbReference>
<dbReference type="Proteomes" id="UP000000624">
    <property type="component" value="Segment"/>
</dbReference>
<protein>
    <recommendedName>
        <fullName evidence="1">Uncharacterized protein C76L</fullName>
    </recommendedName>
</protein>
<feature type="chain" id="PRO_0000454433" description="Uncharacterized protein C76L">
    <location>
        <begin position="1"/>
        <end position="76"/>
    </location>
</feature>
<accession>P0DTH7</accession>
<organism>
    <name type="scientific">African swine fever virus (strain Badajoz 1971 Vero-adapted)</name>
    <name type="common">Ba71V</name>
    <name type="synonym">ASFV</name>
    <dbReference type="NCBI Taxonomy" id="10498"/>
    <lineage>
        <taxon>Viruses</taxon>
        <taxon>Varidnaviria</taxon>
        <taxon>Bamfordvirae</taxon>
        <taxon>Nucleocytoviricota</taxon>
        <taxon>Pokkesviricetes</taxon>
        <taxon>Asfuvirales</taxon>
        <taxon>Asfarviridae</taxon>
        <taxon>Asfivirus</taxon>
        <taxon>African swine fever virus</taxon>
    </lineage>
</organism>
<evidence type="ECO:0000305" key="1"/>
<name>C76L_ASFB7</name>